<comment type="function">
    <text evidence="1">Involved in the gluconeogenesis. Catalyzes the conversion of oxaloacetate (OAA) to phosphoenolpyruvate (PEP) through direct phosphoryl transfer between the nucleoside triphosphate and OAA.</text>
</comment>
<comment type="catalytic activity">
    <reaction evidence="1">
        <text>oxaloacetate + ATP = phosphoenolpyruvate + ADP + CO2</text>
        <dbReference type="Rhea" id="RHEA:18617"/>
        <dbReference type="ChEBI" id="CHEBI:16452"/>
        <dbReference type="ChEBI" id="CHEBI:16526"/>
        <dbReference type="ChEBI" id="CHEBI:30616"/>
        <dbReference type="ChEBI" id="CHEBI:58702"/>
        <dbReference type="ChEBI" id="CHEBI:456216"/>
        <dbReference type="EC" id="4.1.1.49"/>
    </reaction>
</comment>
<comment type="cofactor">
    <cofactor evidence="1">
        <name>Mn(2+)</name>
        <dbReference type="ChEBI" id="CHEBI:29035"/>
    </cofactor>
    <text evidence="1">Binds 1 Mn(2+) ion per subunit.</text>
</comment>
<comment type="pathway">
    <text evidence="1">Carbohydrate biosynthesis; gluconeogenesis.</text>
</comment>
<comment type="subcellular location">
    <subcellularLocation>
        <location evidence="1">Cytoplasm</location>
    </subcellularLocation>
</comment>
<comment type="similarity">
    <text evidence="1">Belongs to the phosphoenolpyruvate carboxykinase (ATP) family.</text>
</comment>
<sequence>MSVDTYTETTKIDKLLKKPTSHFQLSTTQLYNKILDNNEGVLTELGAVNASTGKYTGRSPKDKFFVSEPSYRDNIDWGEINQPIDEETFLKLYHKVLDYLDKKDELYVFKGYAGSDKDTMLKLTVINELAWHNLFAKNMFIRPESKEEATKIKPNFTIVSAPHFKADPEVDGTKSETFVIISFKHKVILIGGTEYAGEMKKGIFSVMNYLLPMQDIMSMHCSANVGEKGDVALFFGLSGTGKTTLSADPHRKLIGDDEHGWNKNGVFNIEGGCYAKAINLSKEKEPQIFDAIKYGAILENTVVAEDGSVDFEDNRYTENTRAAYPINHIDNIVVPSKAAHPNTIIFLTADAFGVIPPISKLNKDQAMYHFLSGFTSKLAGTERGVTEPEPSFSTCFGAPFFPLHPTVYADLLGELIDLHDVDVYLVNTGWTGGKYGVGRRISLHYTRQMVNQAISGKLKNAEYTKDSTFGLSIPVEIEDVPKTILNPINAWSDKEKYKAQAEDLIQRFEKNFEKFGEKVEHIAEKGSFNK</sequence>
<proteinExistence type="evidence at protein level"/>
<dbReference type="EC" id="4.1.1.49" evidence="1"/>
<dbReference type="EMBL" id="BA000018">
    <property type="protein sequence ID" value="BAB42877.1"/>
    <property type="molecule type" value="Genomic_DNA"/>
</dbReference>
<dbReference type="PIR" id="G89964">
    <property type="entry name" value="G89964"/>
</dbReference>
<dbReference type="RefSeq" id="WP_000109906.1">
    <property type="nucleotide sequence ID" value="NC_002745.2"/>
</dbReference>
<dbReference type="SMR" id="P99128"/>
<dbReference type="EnsemblBacteria" id="BAB42877">
    <property type="protein sequence ID" value="BAB42877"/>
    <property type="gene ID" value="BAB42877"/>
</dbReference>
<dbReference type="KEGG" id="sau:SA1609"/>
<dbReference type="HOGENOM" id="CLU_018247_0_1_9"/>
<dbReference type="UniPathway" id="UPA00138"/>
<dbReference type="GO" id="GO:0005829">
    <property type="term" value="C:cytosol"/>
    <property type="evidence" value="ECO:0007669"/>
    <property type="project" value="TreeGrafter"/>
</dbReference>
<dbReference type="GO" id="GO:0005524">
    <property type="term" value="F:ATP binding"/>
    <property type="evidence" value="ECO:0007669"/>
    <property type="project" value="UniProtKB-UniRule"/>
</dbReference>
<dbReference type="GO" id="GO:0046872">
    <property type="term" value="F:metal ion binding"/>
    <property type="evidence" value="ECO:0007669"/>
    <property type="project" value="UniProtKB-KW"/>
</dbReference>
<dbReference type="GO" id="GO:0004612">
    <property type="term" value="F:phosphoenolpyruvate carboxykinase (ATP) activity"/>
    <property type="evidence" value="ECO:0007669"/>
    <property type="project" value="UniProtKB-UniRule"/>
</dbReference>
<dbReference type="GO" id="GO:0006094">
    <property type="term" value="P:gluconeogenesis"/>
    <property type="evidence" value="ECO:0007669"/>
    <property type="project" value="UniProtKB-UniRule"/>
</dbReference>
<dbReference type="CDD" id="cd00484">
    <property type="entry name" value="PEPCK_ATP"/>
    <property type="match status" value="1"/>
</dbReference>
<dbReference type="FunFam" id="2.170.8.10:FF:000001">
    <property type="entry name" value="Phosphoenolpyruvate carboxykinase (ATP)"/>
    <property type="match status" value="1"/>
</dbReference>
<dbReference type="FunFam" id="3.40.449.10:FF:000001">
    <property type="entry name" value="Phosphoenolpyruvate carboxykinase (ATP)"/>
    <property type="match status" value="1"/>
</dbReference>
<dbReference type="Gene3D" id="3.90.228.20">
    <property type="match status" value="1"/>
</dbReference>
<dbReference type="Gene3D" id="3.40.449.10">
    <property type="entry name" value="Phosphoenolpyruvate Carboxykinase, domain 1"/>
    <property type="match status" value="1"/>
</dbReference>
<dbReference type="Gene3D" id="2.170.8.10">
    <property type="entry name" value="Phosphoenolpyruvate Carboxykinase, domain 2"/>
    <property type="match status" value="1"/>
</dbReference>
<dbReference type="HAMAP" id="MF_00453">
    <property type="entry name" value="PEPCK_ATP"/>
    <property type="match status" value="1"/>
</dbReference>
<dbReference type="InterPro" id="IPR001272">
    <property type="entry name" value="PEP_carboxykinase_ATP"/>
</dbReference>
<dbReference type="InterPro" id="IPR013035">
    <property type="entry name" value="PEP_carboxykinase_C"/>
</dbReference>
<dbReference type="InterPro" id="IPR008210">
    <property type="entry name" value="PEP_carboxykinase_N"/>
</dbReference>
<dbReference type="InterPro" id="IPR015994">
    <property type="entry name" value="PEPCK_ATP_CS"/>
</dbReference>
<dbReference type="NCBIfam" id="TIGR00224">
    <property type="entry name" value="pckA"/>
    <property type="match status" value="1"/>
</dbReference>
<dbReference type="NCBIfam" id="NF006820">
    <property type="entry name" value="PRK09344.1-2"/>
    <property type="match status" value="1"/>
</dbReference>
<dbReference type="NCBIfam" id="NF006821">
    <property type="entry name" value="PRK09344.1-3"/>
    <property type="match status" value="1"/>
</dbReference>
<dbReference type="PANTHER" id="PTHR30031:SF0">
    <property type="entry name" value="PHOSPHOENOLPYRUVATE CARBOXYKINASE (ATP)"/>
    <property type="match status" value="1"/>
</dbReference>
<dbReference type="PANTHER" id="PTHR30031">
    <property type="entry name" value="PHOSPHOENOLPYRUVATE CARBOXYKINASE ATP"/>
    <property type="match status" value="1"/>
</dbReference>
<dbReference type="Pfam" id="PF01293">
    <property type="entry name" value="PEPCK_ATP"/>
    <property type="match status" value="1"/>
</dbReference>
<dbReference type="PIRSF" id="PIRSF006294">
    <property type="entry name" value="PEP_crbxkin"/>
    <property type="match status" value="1"/>
</dbReference>
<dbReference type="SUPFAM" id="SSF68923">
    <property type="entry name" value="PEP carboxykinase N-terminal domain"/>
    <property type="match status" value="1"/>
</dbReference>
<dbReference type="SUPFAM" id="SSF53795">
    <property type="entry name" value="PEP carboxykinase-like"/>
    <property type="match status" value="1"/>
</dbReference>
<dbReference type="PROSITE" id="PS00532">
    <property type="entry name" value="PEPCK_ATP"/>
    <property type="match status" value="1"/>
</dbReference>
<feature type="chain" id="PRO_0000203845" description="Phosphoenolpyruvate carboxykinase (ATP)">
    <location>
        <begin position="1"/>
        <end position="530"/>
    </location>
</feature>
<feature type="binding site" evidence="1">
    <location>
        <position position="58"/>
    </location>
    <ligand>
        <name>substrate</name>
    </ligand>
</feature>
<feature type="binding site" evidence="1">
    <location>
        <position position="195"/>
    </location>
    <ligand>
        <name>substrate</name>
    </ligand>
</feature>
<feature type="binding site" evidence="1">
    <location>
        <position position="201"/>
    </location>
    <ligand>
        <name>ATP</name>
        <dbReference type="ChEBI" id="CHEBI:30616"/>
    </ligand>
</feature>
<feature type="binding site" evidence="1">
    <location>
        <position position="201"/>
    </location>
    <ligand>
        <name>Mn(2+)</name>
        <dbReference type="ChEBI" id="CHEBI:29035"/>
    </ligand>
</feature>
<feature type="binding site" evidence="1">
    <location>
        <position position="201"/>
    </location>
    <ligand>
        <name>substrate</name>
    </ligand>
</feature>
<feature type="binding site" evidence="1">
    <location>
        <position position="220"/>
    </location>
    <ligand>
        <name>ATP</name>
        <dbReference type="ChEBI" id="CHEBI:30616"/>
    </ligand>
</feature>
<feature type="binding site" evidence="1">
    <location>
        <position position="220"/>
    </location>
    <ligand>
        <name>Mn(2+)</name>
        <dbReference type="ChEBI" id="CHEBI:29035"/>
    </ligand>
</feature>
<feature type="binding site" evidence="1">
    <location>
        <begin position="236"/>
        <end position="244"/>
    </location>
    <ligand>
        <name>ATP</name>
        <dbReference type="ChEBI" id="CHEBI:30616"/>
    </ligand>
</feature>
<feature type="binding site" evidence="1">
    <location>
        <position position="257"/>
    </location>
    <ligand>
        <name>Mn(2+)</name>
        <dbReference type="ChEBI" id="CHEBI:29035"/>
    </ligand>
</feature>
<feature type="binding site" evidence="1">
    <location>
        <position position="285"/>
    </location>
    <ligand>
        <name>ATP</name>
        <dbReference type="ChEBI" id="CHEBI:30616"/>
    </ligand>
</feature>
<feature type="binding site" evidence="1">
    <location>
        <position position="321"/>
    </location>
    <ligand>
        <name>ATP</name>
        <dbReference type="ChEBI" id="CHEBI:30616"/>
    </ligand>
</feature>
<feature type="binding site" evidence="1">
    <location>
        <position position="321"/>
    </location>
    <ligand>
        <name>substrate</name>
    </ligand>
</feature>
<feature type="binding site" evidence="1">
    <location>
        <begin position="440"/>
        <end position="441"/>
    </location>
    <ligand>
        <name>ATP</name>
        <dbReference type="ChEBI" id="CHEBI:30616"/>
    </ligand>
</feature>
<feature type="binding site" evidence="1">
    <location>
        <position position="446"/>
    </location>
    <ligand>
        <name>ATP</name>
        <dbReference type="ChEBI" id="CHEBI:30616"/>
    </ligand>
</feature>
<organism>
    <name type="scientific">Staphylococcus aureus (strain N315)</name>
    <dbReference type="NCBI Taxonomy" id="158879"/>
    <lineage>
        <taxon>Bacteria</taxon>
        <taxon>Bacillati</taxon>
        <taxon>Bacillota</taxon>
        <taxon>Bacilli</taxon>
        <taxon>Bacillales</taxon>
        <taxon>Staphylococcaceae</taxon>
        <taxon>Staphylococcus</taxon>
    </lineage>
</organism>
<keyword id="KW-0067">ATP-binding</keyword>
<keyword id="KW-0963">Cytoplasm</keyword>
<keyword id="KW-0210">Decarboxylase</keyword>
<keyword id="KW-0312">Gluconeogenesis</keyword>
<keyword id="KW-0456">Lyase</keyword>
<keyword id="KW-0464">Manganese</keyword>
<keyword id="KW-0479">Metal-binding</keyword>
<keyword id="KW-0547">Nucleotide-binding</keyword>
<name>PCKA_STAAN</name>
<gene>
    <name evidence="1" type="primary">pckA</name>
    <name type="ordered locus">SA1609</name>
</gene>
<evidence type="ECO:0000255" key="1">
    <source>
        <dbReference type="HAMAP-Rule" id="MF_00453"/>
    </source>
</evidence>
<protein>
    <recommendedName>
        <fullName evidence="1">Phosphoenolpyruvate carboxykinase (ATP)</fullName>
        <shortName evidence="1">PCK</shortName>
        <shortName evidence="1">PEP carboxykinase</shortName>
        <shortName evidence="1">PEPCK</shortName>
        <ecNumber evidence="1">4.1.1.49</ecNumber>
    </recommendedName>
</protein>
<accession>P99128</accession>
<accession>P51065</accession>
<reference key="1">
    <citation type="journal article" date="2001" name="Lancet">
        <title>Whole genome sequencing of meticillin-resistant Staphylococcus aureus.</title>
        <authorList>
            <person name="Kuroda M."/>
            <person name="Ohta T."/>
            <person name="Uchiyama I."/>
            <person name="Baba T."/>
            <person name="Yuzawa H."/>
            <person name="Kobayashi I."/>
            <person name="Cui L."/>
            <person name="Oguchi A."/>
            <person name="Aoki K."/>
            <person name="Nagai Y."/>
            <person name="Lian J.-Q."/>
            <person name="Ito T."/>
            <person name="Kanamori M."/>
            <person name="Matsumaru H."/>
            <person name="Maruyama A."/>
            <person name="Murakami H."/>
            <person name="Hosoyama A."/>
            <person name="Mizutani-Ui Y."/>
            <person name="Takahashi N.K."/>
            <person name="Sawano T."/>
            <person name="Inoue R."/>
            <person name="Kaito C."/>
            <person name="Sekimizu K."/>
            <person name="Hirakawa H."/>
            <person name="Kuhara S."/>
            <person name="Goto S."/>
            <person name="Yabuzaki J."/>
            <person name="Kanehisa M."/>
            <person name="Yamashita A."/>
            <person name="Oshima K."/>
            <person name="Furuya K."/>
            <person name="Yoshino C."/>
            <person name="Shiba T."/>
            <person name="Hattori M."/>
            <person name="Ogasawara N."/>
            <person name="Hayashi H."/>
            <person name="Hiramatsu K."/>
        </authorList>
    </citation>
    <scope>NUCLEOTIDE SEQUENCE [LARGE SCALE GENOMIC DNA]</scope>
    <source>
        <strain>N315</strain>
    </source>
</reference>
<reference key="2">
    <citation type="journal article" date="2005" name="J. Microbiol. Methods">
        <title>Correlation of proteomic and transcriptomic profiles of Staphylococcus aureus during the post-exponential phase of growth.</title>
        <authorList>
            <person name="Scherl A."/>
            <person name="Francois P."/>
            <person name="Bento M."/>
            <person name="Deshusses J.M."/>
            <person name="Charbonnier Y."/>
            <person name="Converset V."/>
            <person name="Huyghe A."/>
            <person name="Walter N."/>
            <person name="Hoogland C."/>
            <person name="Appel R.D."/>
            <person name="Sanchez J.-C."/>
            <person name="Zimmermann-Ivol C.G."/>
            <person name="Corthals G.L."/>
            <person name="Hochstrasser D.F."/>
            <person name="Schrenzel J."/>
        </authorList>
    </citation>
    <scope>IDENTIFICATION BY MASS SPECTROMETRY</scope>
    <source>
        <strain>N315</strain>
    </source>
</reference>
<reference key="3">
    <citation type="submission" date="2007-10" db="UniProtKB">
        <title>Shotgun proteomic analysis of total and membrane protein extracts of S. aureus strain N315.</title>
        <authorList>
            <person name="Vaezzadeh A.R."/>
            <person name="Deshusses J."/>
            <person name="Lescuyer P."/>
            <person name="Hochstrasser D.F."/>
        </authorList>
    </citation>
    <scope>IDENTIFICATION BY MASS SPECTROMETRY [LARGE SCALE ANALYSIS]</scope>
    <source>
        <strain>N315</strain>
    </source>
</reference>